<sequence>MSELTIRPEEIRAALEEFVSSYTPDVASREEVGRVTEAGDGIARIEGLPSTMANELLRFEDGTLGLALNLDVREIGAVILGPFEGIEEGQTVKRTGEVLSVPVGDGFLGRVVDPLGRPLDGKGEIVAEGRRALEIQAPSVVQRQPVKEPLQTGIKAIDAMTAIGRGQRELIIGDRQTGKTAVAIDTIINQRANWESGDPKLQVKCIYVAIGQKGSTIAAVRSALEAAGAMEYTTIVAAPASDPAGFKYLAPYTGSAIGQHWMYKGQHALIVFDDLSKQAEAYRAISLLLRRPPGREAYPGDVFYLHSRLLERCAKLSDAMGGGSLTGLPIIETKGNDVSAYIPTNVISITDGQIFLETDLFNSGVRPAINVGISVSRVGGNAQLKAMKQVAGRLRLDLAQYRELEAFAAFGSDLDAASRAQLERGARLVELLKQPQYSPYPVEEQVVSLWAGTTGQLDDVPVTDIRRFERDFLEYVRLRHHGIFDEILKTGELTDNVVESLKLAIAEFKQTFETHDGKILGHEEAPQLDESHLAAEKVRKHVPPSKPTTQRTAG</sequence>
<dbReference type="EC" id="7.1.2.2" evidence="1"/>
<dbReference type="EMBL" id="CP000481">
    <property type="protein sequence ID" value="ABK52424.1"/>
    <property type="molecule type" value="Genomic_DNA"/>
</dbReference>
<dbReference type="RefSeq" id="WP_011719487.1">
    <property type="nucleotide sequence ID" value="NC_008578.1"/>
</dbReference>
<dbReference type="SMR" id="A0LSL4"/>
<dbReference type="FunCoup" id="A0LSL4">
    <property type="interactions" value="295"/>
</dbReference>
<dbReference type="STRING" id="351607.Acel_0651"/>
<dbReference type="KEGG" id="ace:Acel_0651"/>
<dbReference type="eggNOG" id="COG0056">
    <property type="taxonomic scope" value="Bacteria"/>
</dbReference>
<dbReference type="HOGENOM" id="CLU_010091_2_1_11"/>
<dbReference type="InParanoid" id="A0LSL4"/>
<dbReference type="OrthoDB" id="9803053at2"/>
<dbReference type="Proteomes" id="UP000008221">
    <property type="component" value="Chromosome"/>
</dbReference>
<dbReference type="GO" id="GO:0005886">
    <property type="term" value="C:plasma membrane"/>
    <property type="evidence" value="ECO:0007669"/>
    <property type="project" value="UniProtKB-SubCell"/>
</dbReference>
<dbReference type="GO" id="GO:0045259">
    <property type="term" value="C:proton-transporting ATP synthase complex"/>
    <property type="evidence" value="ECO:0007669"/>
    <property type="project" value="UniProtKB-KW"/>
</dbReference>
<dbReference type="GO" id="GO:0043531">
    <property type="term" value="F:ADP binding"/>
    <property type="evidence" value="ECO:0007669"/>
    <property type="project" value="TreeGrafter"/>
</dbReference>
<dbReference type="GO" id="GO:0005524">
    <property type="term" value="F:ATP binding"/>
    <property type="evidence" value="ECO:0007669"/>
    <property type="project" value="UniProtKB-UniRule"/>
</dbReference>
<dbReference type="GO" id="GO:0046933">
    <property type="term" value="F:proton-transporting ATP synthase activity, rotational mechanism"/>
    <property type="evidence" value="ECO:0007669"/>
    <property type="project" value="UniProtKB-UniRule"/>
</dbReference>
<dbReference type="CDD" id="cd18113">
    <property type="entry name" value="ATP-synt_F1_alpha_C"/>
    <property type="match status" value="1"/>
</dbReference>
<dbReference type="CDD" id="cd18116">
    <property type="entry name" value="ATP-synt_F1_alpha_N"/>
    <property type="match status" value="1"/>
</dbReference>
<dbReference type="CDD" id="cd01132">
    <property type="entry name" value="F1-ATPase_alpha_CD"/>
    <property type="match status" value="1"/>
</dbReference>
<dbReference type="FunFam" id="1.20.150.20:FF:000001">
    <property type="entry name" value="ATP synthase subunit alpha"/>
    <property type="match status" value="1"/>
</dbReference>
<dbReference type="FunFam" id="3.40.50.300:FF:000002">
    <property type="entry name" value="ATP synthase subunit alpha"/>
    <property type="match status" value="1"/>
</dbReference>
<dbReference type="Gene3D" id="2.40.30.20">
    <property type="match status" value="1"/>
</dbReference>
<dbReference type="Gene3D" id="1.20.150.20">
    <property type="entry name" value="ATP synthase alpha/beta chain, C-terminal domain"/>
    <property type="match status" value="1"/>
</dbReference>
<dbReference type="Gene3D" id="3.40.50.300">
    <property type="entry name" value="P-loop containing nucleotide triphosphate hydrolases"/>
    <property type="match status" value="1"/>
</dbReference>
<dbReference type="HAMAP" id="MF_01346">
    <property type="entry name" value="ATP_synth_alpha_bact"/>
    <property type="match status" value="1"/>
</dbReference>
<dbReference type="InterPro" id="IPR023366">
    <property type="entry name" value="ATP_synth_asu-like_sf"/>
</dbReference>
<dbReference type="InterPro" id="IPR000793">
    <property type="entry name" value="ATP_synth_asu_C"/>
</dbReference>
<dbReference type="InterPro" id="IPR038376">
    <property type="entry name" value="ATP_synth_asu_C_sf"/>
</dbReference>
<dbReference type="InterPro" id="IPR033732">
    <property type="entry name" value="ATP_synth_F1_a_nt-bd_dom"/>
</dbReference>
<dbReference type="InterPro" id="IPR005294">
    <property type="entry name" value="ATP_synth_F1_asu"/>
</dbReference>
<dbReference type="InterPro" id="IPR020003">
    <property type="entry name" value="ATPase_a/bsu_AS"/>
</dbReference>
<dbReference type="InterPro" id="IPR004100">
    <property type="entry name" value="ATPase_F1/V1/A1_a/bsu_N"/>
</dbReference>
<dbReference type="InterPro" id="IPR036121">
    <property type="entry name" value="ATPase_F1/V1/A1_a/bsu_N_sf"/>
</dbReference>
<dbReference type="InterPro" id="IPR000194">
    <property type="entry name" value="ATPase_F1/V1/A1_a/bsu_nucl-bd"/>
</dbReference>
<dbReference type="InterPro" id="IPR027417">
    <property type="entry name" value="P-loop_NTPase"/>
</dbReference>
<dbReference type="NCBIfam" id="TIGR00962">
    <property type="entry name" value="atpA"/>
    <property type="match status" value="1"/>
</dbReference>
<dbReference type="NCBIfam" id="NF009884">
    <property type="entry name" value="PRK13343.1"/>
    <property type="match status" value="1"/>
</dbReference>
<dbReference type="PANTHER" id="PTHR48082">
    <property type="entry name" value="ATP SYNTHASE SUBUNIT ALPHA, MITOCHONDRIAL"/>
    <property type="match status" value="1"/>
</dbReference>
<dbReference type="PANTHER" id="PTHR48082:SF2">
    <property type="entry name" value="ATP SYNTHASE SUBUNIT ALPHA, MITOCHONDRIAL"/>
    <property type="match status" value="1"/>
</dbReference>
<dbReference type="Pfam" id="PF00006">
    <property type="entry name" value="ATP-synt_ab"/>
    <property type="match status" value="1"/>
</dbReference>
<dbReference type="Pfam" id="PF00306">
    <property type="entry name" value="ATP-synt_ab_C"/>
    <property type="match status" value="1"/>
</dbReference>
<dbReference type="Pfam" id="PF02874">
    <property type="entry name" value="ATP-synt_ab_N"/>
    <property type="match status" value="1"/>
</dbReference>
<dbReference type="SUPFAM" id="SSF47917">
    <property type="entry name" value="C-terminal domain of alpha and beta subunits of F1 ATP synthase"/>
    <property type="match status" value="1"/>
</dbReference>
<dbReference type="SUPFAM" id="SSF50615">
    <property type="entry name" value="N-terminal domain of alpha and beta subunits of F1 ATP synthase"/>
    <property type="match status" value="1"/>
</dbReference>
<dbReference type="SUPFAM" id="SSF52540">
    <property type="entry name" value="P-loop containing nucleoside triphosphate hydrolases"/>
    <property type="match status" value="1"/>
</dbReference>
<dbReference type="PROSITE" id="PS00152">
    <property type="entry name" value="ATPASE_ALPHA_BETA"/>
    <property type="match status" value="1"/>
</dbReference>
<evidence type="ECO:0000255" key="1">
    <source>
        <dbReference type="HAMAP-Rule" id="MF_01346"/>
    </source>
</evidence>
<evidence type="ECO:0000256" key="2">
    <source>
        <dbReference type="SAM" id="MobiDB-lite"/>
    </source>
</evidence>
<protein>
    <recommendedName>
        <fullName evidence="1">ATP synthase subunit alpha</fullName>
        <ecNumber evidence="1">7.1.2.2</ecNumber>
    </recommendedName>
    <alternativeName>
        <fullName evidence="1">ATP synthase F1 sector subunit alpha</fullName>
    </alternativeName>
    <alternativeName>
        <fullName evidence="1">F-ATPase subunit alpha</fullName>
    </alternativeName>
</protein>
<reference key="1">
    <citation type="journal article" date="2009" name="Genome Res.">
        <title>Complete genome of the cellulolytic thermophile Acidothermus cellulolyticus 11B provides insights into its ecophysiological and evolutionary adaptations.</title>
        <authorList>
            <person name="Barabote R.D."/>
            <person name="Xie G."/>
            <person name="Leu D.H."/>
            <person name="Normand P."/>
            <person name="Necsulea A."/>
            <person name="Daubin V."/>
            <person name="Medigue C."/>
            <person name="Adney W.S."/>
            <person name="Xu X.C."/>
            <person name="Lapidus A."/>
            <person name="Parales R.E."/>
            <person name="Detter C."/>
            <person name="Pujic P."/>
            <person name="Bruce D."/>
            <person name="Lavire C."/>
            <person name="Challacombe J.F."/>
            <person name="Brettin T.S."/>
            <person name="Berry A.M."/>
        </authorList>
    </citation>
    <scope>NUCLEOTIDE SEQUENCE [LARGE SCALE GENOMIC DNA]</scope>
    <source>
        <strain>ATCC 43068 / DSM 8971 / 11B</strain>
    </source>
</reference>
<organism>
    <name type="scientific">Acidothermus cellulolyticus (strain ATCC 43068 / DSM 8971 / 11B)</name>
    <dbReference type="NCBI Taxonomy" id="351607"/>
    <lineage>
        <taxon>Bacteria</taxon>
        <taxon>Bacillati</taxon>
        <taxon>Actinomycetota</taxon>
        <taxon>Actinomycetes</taxon>
        <taxon>Acidothermales</taxon>
        <taxon>Acidothermaceae</taxon>
        <taxon>Acidothermus</taxon>
    </lineage>
</organism>
<name>ATPA_ACIC1</name>
<feature type="chain" id="PRO_0000302620" description="ATP synthase subunit alpha">
    <location>
        <begin position="1"/>
        <end position="554"/>
    </location>
</feature>
<feature type="region of interest" description="Disordered" evidence="2">
    <location>
        <begin position="531"/>
        <end position="554"/>
    </location>
</feature>
<feature type="binding site" evidence="1">
    <location>
        <begin position="173"/>
        <end position="180"/>
    </location>
    <ligand>
        <name>ATP</name>
        <dbReference type="ChEBI" id="CHEBI:30616"/>
    </ligand>
</feature>
<feature type="site" description="Required for activity" evidence="1">
    <location>
        <position position="374"/>
    </location>
</feature>
<comment type="function">
    <text evidence="1">Produces ATP from ADP in the presence of a proton gradient across the membrane. The alpha chain is a regulatory subunit.</text>
</comment>
<comment type="catalytic activity">
    <reaction evidence="1">
        <text>ATP + H2O + 4 H(+)(in) = ADP + phosphate + 5 H(+)(out)</text>
        <dbReference type="Rhea" id="RHEA:57720"/>
        <dbReference type="ChEBI" id="CHEBI:15377"/>
        <dbReference type="ChEBI" id="CHEBI:15378"/>
        <dbReference type="ChEBI" id="CHEBI:30616"/>
        <dbReference type="ChEBI" id="CHEBI:43474"/>
        <dbReference type="ChEBI" id="CHEBI:456216"/>
        <dbReference type="EC" id="7.1.2.2"/>
    </reaction>
</comment>
<comment type="subunit">
    <text evidence="1">F-type ATPases have 2 components, CF(1) - the catalytic core - and CF(0) - the membrane proton channel. CF(1) has five subunits: alpha(3), beta(3), gamma(1), delta(1), epsilon(1). CF(0) has three main subunits: a(1), b(2) and c(9-12). The alpha and beta chains form an alternating ring which encloses part of the gamma chain. CF(1) is attached to CF(0) by a central stalk formed by the gamma and epsilon chains, while a peripheral stalk is formed by the delta and b chains.</text>
</comment>
<comment type="subcellular location">
    <subcellularLocation>
        <location evidence="1">Cell membrane</location>
        <topology evidence="1">Peripheral membrane protein</topology>
    </subcellularLocation>
</comment>
<comment type="similarity">
    <text evidence="1">Belongs to the ATPase alpha/beta chains family.</text>
</comment>
<keyword id="KW-0066">ATP synthesis</keyword>
<keyword id="KW-0067">ATP-binding</keyword>
<keyword id="KW-1003">Cell membrane</keyword>
<keyword id="KW-0139">CF(1)</keyword>
<keyword id="KW-0375">Hydrogen ion transport</keyword>
<keyword id="KW-0406">Ion transport</keyword>
<keyword id="KW-0472">Membrane</keyword>
<keyword id="KW-0547">Nucleotide-binding</keyword>
<keyword id="KW-1185">Reference proteome</keyword>
<keyword id="KW-1278">Translocase</keyword>
<keyword id="KW-0813">Transport</keyword>
<gene>
    <name evidence="1" type="primary">atpA</name>
    <name type="ordered locus">Acel_0651</name>
</gene>
<accession>A0LSL4</accession>
<proteinExistence type="inferred from homology"/>